<protein>
    <recommendedName>
        <fullName evidence="1">Large ribosomal subunit protein bL9</fullName>
    </recommendedName>
    <alternativeName>
        <fullName evidence="2">50S ribosomal protein L9</fullName>
    </alternativeName>
</protein>
<feature type="chain" id="PRO_1000126887" description="Large ribosomal subunit protein bL9">
    <location>
        <begin position="1"/>
        <end position="167"/>
    </location>
</feature>
<gene>
    <name evidence="1" type="primary">rplI</name>
    <name type="ordered locus">CTL0172</name>
</gene>
<keyword id="KW-0687">Ribonucleoprotein</keyword>
<keyword id="KW-0689">Ribosomal protein</keyword>
<keyword id="KW-0694">RNA-binding</keyword>
<keyword id="KW-0699">rRNA-binding</keyword>
<reference key="1">
    <citation type="journal article" date="2008" name="Genome Res.">
        <title>Chlamydia trachomatis: genome sequence analysis of lymphogranuloma venereum isolates.</title>
        <authorList>
            <person name="Thomson N.R."/>
            <person name="Holden M.T.G."/>
            <person name="Carder C."/>
            <person name="Lennard N."/>
            <person name="Lockey S.J."/>
            <person name="Marsh P."/>
            <person name="Skipp P."/>
            <person name="O'Connor C.D."/>
            <person name="Goodhead I."/>
            <person name="Norbertzcak H."/>
            <person name="Harris B."/>
            <person name="Ormond D."/>
            <person name="Rance R."/>
            <person name="Quail M.A."/>
            <person name="Parkhill J."/>
            <person name="Stephens R.S."/>
            <person name="Clarke I.N."/>
        </authorList>
    </citation>
    <scope>NUCLEOTIDE SEQUENCE [LARGE SCALE GENOMIC DNA]</scope>
    <source>
        <strain>ATCC VR-902B / DSM 19102 / 434/Bu</strain>
    </source>
</reference>
<dbReference type="EMBL" id="AM884176">
    <property type="protein sequence ID" value="CAP03617.1"/>
    <property type="molecule type" value="Genomic_DNA"/>
</dbReference>
<dbReference type="RefSeq" id="WP_009872185.1">
    <property type="nucleotide sequence ID" value="NC_010287.1"/>
</dbReference>
<dbReference type="RefSeq" id="YP_001654263.1">
    <property type="nucleotide sequence ID" value="NC_010287.1"/>
</dbReference>
<dbReference type="SMR" id="B0B930"/>
<dbReference type="KEGG" id="ctb:CTL0172"/>
<dbReference type="PATRIC" id="fig|471472.4.peg.186"/>
<dbReference type="HOGENOM" id="CLU_078938_5_1_0"/>
<dbReference type="Proteomes" id="UP001154402">
    <property type="component" value="Chromosome"/>
</dbReference>
<dbReference type="GO" id="GO:1990904">
    <property type="term" value="C:ribonucleoprotein complex"/>
    <property type="evidence" value="ECO:0007669"/>
    <property type="project" value="UniProtKB-KW"/>
</dbReference>
<dbReference type="GO" id="GO:0005840">
    <property type="term" value="C:ribosome"/>
    <property type="evidence" value="ECO:0007669"/>
    <property type="project" value="UniProtKB-KW"/>
</dbReference>
<dbReference type="GO" id="GO:0019843">
    <property type="term" value="F:rRNA binding"/>
    <property type="evidence" value="ECO:0007669"/>
    <property type="project" value="UniProtKB-UniRule"/>
</dbReference>
<dbReference type="GO" id="GO:0003735">
    <property type="term" value="F:structural constituent of ribosome"/>
    <property type="evidence" value="ECO:0007669"/>
    <property type="project" value="InterPro"/>
</dbReference>
<dbReference type="GO" id="GO:0006412">
    <property type="term" value="P:translation"/>
    <property type="evidence" value="ECO:0007669"/>
    <property type="project" value="UniProtKB-UniRule"/>
</dbReference>
<dbReference type="Gene3D" id="3.10.430.100">
    <property type="entry name" value="Ribosomal protein L9, C-terminal domain"/>
    <property type="match status" value="1"/>
</dbReference>
<dbReference type="Gene3D" id="3.40.5.10">
    <property type="entry name" value="Ribosomal protein L9, N-terminal domain"/>
    <property type="match status" value="1"/>
</dbReference>
<dbReference type="HAMAP" id="MF_00503">
    <property type="entry name" value="Ribosomal_bL9"/>
    <property type="match status" value="1"/>
</dbReference>
<dbReference type="InterPro" id="IPR000244">
    <property type="entry name" value="Ribosomal_bL9"/>
</dbReference>
<dbReference type="InterPro" id="IPR009027">
    <property type="entry name" value="Ribosomal_bL9/RNase_H1_N"/>
</dbReference>
<dbReference type="InterPro" id="IPR020594">
    <property type="entry name" value="Ribosomal_bL9_bac/chp"/>
</dbReference>
<dbReference type="InterPro" id="IPR020069">
    <property type="entry name" value="Ribosomal_bL9_C"/>
</dbReference>
<dbReference type="InterPro" id="IPR036791">
    <property type="entry name" value="Ribosomal_bL9_C_sf"/>
</dbReference>
<dbReference type="InterPro" id="IPR020070">
    <property type="entry name" value="Ribosomal_bL9_N"/>
</dbReference>
<dbReference type="InterPro" id="IPR036935">
    <property type="entry name" value="Ribosomal_bL9_N_sf"/>
</dbReference>
<dbReference type="NCBIfam" id="TIGR00158">
    <property type="entry name" value="L9"/>
    <property type="match status" value="1"/>
</dbReference>
<dbReference type="PANTHER" id="PTHR21368">
    <property type="entry name" value="50S RIBOSOMAL PROTEIN L9"/>
    <property type="match status" value="1"/>
</dbReference>
<dbReference type="Pfam" id="PF03948">
    <property type="entry name" value="Ribosomal_L9_C"/>
    <property type="match status" value="1"/>
</dbReference>
<dbReference type="Pfam" id="PF01281">
    <property type="entry name" value="Ribosomal_L9_N"/>
    <property type="match status" value="1"/>
</dbReference>
<dbReference type="SUPFAM" id="SSF55658">
    <property type="entry name" value="L9 N-domain-like"/>
    <property type="match status" value="1"/>
</dbReference>
<dbReference type="SUPFAM" id="SSF55653">
    <property type="entry name" value="Ribosomal protein L9 C-domain"/>
    <property type="match status" value="1"/>
</dbReference>
<dbReference type="PROSITE" id="PS00651">
    <property type="entry name" value="RIBOSOMAL_L9"/>
    <property type="match status" value="1"/>
</dbReference>
<proteinExistence type="inferred from homology"/>
<evidence type="ECO:0000255" key="1">
    <source>
        <dbReference type="HAMAP-Rule" id="MF_00503"/>
    </source>
</evidence>
<evidence type="ECO:0000305" key="2"/>
<accession>B0B930</accession>
<name>RL9_CHLT2</name>
<organism>
    <name type="scientific">Chlamydia trachomatis serovar L2 (strain ATCC VR-902B / DSM 19102 / 434/Bu)</name>
    <dbReference type="NCBI Taxonomy" id="471472"/>
    <lineage>
        <taxon>Bacteria</taxon>
        <taxon>Pseudomonadati</taxon>
        <taxon>Chlamydiota</taxon>
        <taxon>Chlamydiia</taxon>
        <taxon>Chlamydiales</taxon>
        <taxon>Chlamydiaceae</taxon>
        <taxon>Chlamydia/Chlamydophila group</taxon>
        <taxon>Chlamydia</taxon>
    </lineage>
</organism>
<comment type="function">
    <text evidence="1">Binds to the 23S rRNA.</text>
</comment>
<comment type="similarity">
    <text evidence="1">Belongs to the bacterial ribosomal protein bL9 family.</text>
</comment>
<sequence length="167" mass="18437">MKPQLLLLEDVDGLGRSGDLVVAKPGYVRNYLLPKGKAVVASAGTLRLQAKLQEQRLLQAAADKEESLRLAEMLRSIVLDFQVRVDSENNMYGSVTVNDMISAAEQQGVVLTRKNFPRSHSGIKNLGRHVVGLKLKEGVTADLHLEVRADHEIIEQKELQSAEEQEG</sequence>